<reference key="1">
    <citation type="journal article" date="2004" name="Nature">
        <title>Genome sequence of the Brown Norway rat yields insights into mammalian evolution.</title>
        <authorList>
            <person name="Gibbs R.A."/>
            <person name="Weinstock G.M."/>
            <person name="Metzker M.L."/>
            <person name="Muzny D.M."/>
            <person name="Sodergren E.J."/>
            <person name="Scherer S."/>
            <person name="Scott G."/>
            <person name="Steffen D."/>
            <person name="Worley K.C."/>
            <person name="Burch P.E."/>
            <person name="Okwuonu G."/>
            <person name="Hines S."/>
            <person name="Lewis L."/>
            <person name="Deramo C."/>
            <person name="Delgado O."/>
            <person name="Dugan-Rocha S."/>
            <person name="Miner G."/>
            <person name="Morgan M."/>
            <person name="Hawes A."/>
            <person name="Gill R."/>
            <person name="Holt R.A."/>
            <person name="Adams M.D."/>
            <person name="Amanatides P.G."/>
            <person name="Baden-Tillson H."/>
            <person name="Barnstead M."/>
            <person name="Chin S."/>
            <person name="Evans C.A."/>
            <person name="Ferriera S."/>
            <person name="Fosler C."/>
            <person name="Glodek A."/>
            <person name="Gu Z."/>
            <person name="Jennings D."/>
            <person name="Kraft C.L."/>
            <person name="Nguyen T."/>
            <person name="Pfannkoch C.M."/>
            <person name="Sitter C."/>
            <person name="Sutton G.G."/>
            <person name="Venter J.C."/>
            <person name="Woodage T."/>
            <person name="Smith D."/>
            <person name="Lee H.-M."/>
            <person name="Gustafson E."/>
            <person name="Cahill P."/>
            <person name="Kana A."/>
            <person name="Doucette-Stamm L."/>
            <person name="Weinstock K."/>
            <person name="Fechtel K."/>
            <person name="Weiss R.B."/>
            <person name="Dunn D.M."/>
            <person name="Green E.D."/>
            <person name="Blakesley R.W."/>
            <person name="Bouffard G.G."/>
            <person name="De Jong P.J."/>
            <person name="Osoegawa K."/>
            <person name="Zhu B."/>
            <person name="Marra M."/>
            <person name="Schein J."/>
            <person name="Bosdet I."/>
            <person name="Fjell C."/>
            <person name="Jones S."/>
            <person name="Krzywinski M."/>
            <person name="Mathewson C."/>
            <person name="Siddiqui A."/>
            <person name="Wye N."/>
            <person name="McPherson J."/>
            <person name="Zhao S."/>
            <person name="Fraser C.M."/>
            <person name="Shetty J."/>
            <person name="Shatsman S."/>
            <person name="Geer K."/>
            <person name="Chen Y."/>
            <person name="Abramzon S."/>
            <person name="Nierman W.C."/>
            <person name="Havlak P.H."/>
            <person name="Chen R."/>
            <person name="Durbin K.J."/>
            <person name="Egan A."/>
            <person name="Ren Y."/>
            <person name="Song X.-Z."/>
            <person name="Li B."/>
            <person name="Liu Y."/>
            <person name="Qin X."/>
            <person name="Cawley S."/>
            <person name="Cooney A.J."/>
            <person name="D'Souza L.M."/>
            <person name="Martin K."/>
            <person name="Wu J.Q."/>
            <person name="Gonzalez-Garay M.L."/>
            <person name="Jackson A.R."/>
            <person name="Kalafus K.J."/>
            <person name="McLeod M.P."/>
            <person name="Milosavljevic A."/>
            <person name="Virk D."/>
            <person name="Volkov A."/>
            <person name="Wheeler D.A."/>
            <person name="Zhang Z."/>
            <person name="Bailey J.A."/>
            <person name="Eichler E.E."/>
            <person name="Tuzun E."/>
            <person name="Birney E."/>
            <person name="Mongin E."/>
            <person name="Ureta-Vidal A."/>
            <person name="Woodwark C."/>
            <person name="Zdobnov E."/>
            <person name="Bork P."/>
            <person name="Suyama M."/>
            <person name="Torrents D."/>
            <person name="Alexandersson M."/>
            <person name="Trask B.J."/>
            <person name="Young J.M."/>
            <person name="Huang H."/>
            <person name="Wang H."/>
            <person name="Xing H."/>
            <person name="Daniels S."/>
            <person name="Gietzen D."/>
            <person name="Schmidt J."/>
            <person name="Stevens K."/>
            <person name="Vitt U."/>
            <person name="Wingrove J."/>
            <person name="Camara F."/>
            <person name="Mar Alba M."/>
            <person name="Abril J.F."/>
            <person name="Guigo R."/>
            <person name="Smit A."/>
            <person name="Dubchak I."/>
            <person name="Rubin E.M."/>
            <person name="Couronne O."/>
            <person name="Poliakov A."/>
            <person name="Huebner N."/>
            <person name="Ganten D."/>
            <person name="Goesele C."/>
            <person name="Hummel O."/>
            <person name="Kreitler T."/>
            <person name="Lee Y.-A."/>
            <person name="Monti J."/>
            <person name="Schulz H."/>
            <person name="Zimdahl H."/>
            <person name="Himmelbauer H."/>
            <person name="Lehrach H."/>
            <person name="Jacob H.J."/>
            <person name="Bromberg S."/>
            <person name="Gullings-Handley J."/>
            <person name="Jensen-Seaman M.I."/>
            <person name="Kwitek A.E."/>
            <person name="Lazar J."/>
            <person name="Pasko D."/>
            <person name="Tonellato P.J."/>
            <person name="Twigger S."/>
            <person name="Ponting C.P."/>
            <person name="Duarte J.M."/>
            <person name="Rice S."/>
            <person name="Goodstadt L."/>
            <person name="Beatson S.A."/>
            <person name="Emes R.D."/>
            <person name="Winter E.E."/>
            <person name="Webber C."/>
            <person name="Brandt P."/>
            <person name="Nyakatura G."/>
            <person name="Adetobi M."/>
            <person name="Chiaromonte F."/>
            <person name="Elnitski L."/>
            <person name="Eswara P."/>
            <person name="Hardison R.C."/>
            <person name="Hou M."/>
            <person name="Kolbe D."/>
            <person name="Makova K."/>
            <person name="Miller W."/>
            <person name="Nekrutenko A."/>
            <person name="Riemer C."/>
            <person name="Schwartz S."/>
            <person name="Taylor J."/>
            <person name="Yang S."/>
            <person name="Zhang Y."/>
            <person name="Lindpaintner K."/>
            <person name="Andrews T.D."/>
            <person name="Caccamo M."/>
            <person name="Clamp M."/>
            <person name="Clarke L."/>
            <person name="Curwen V."/>
            <person name="Durbin R.M."/>
            <person name="Eyras E."/>
            <person name="Searle S.M."/>
            <person name="Cooper G.M."/>
            <person name="Batzoglou S."/>
            <person name="Brudno M."/>
            <person name="Sidow A."/>
            <person name="Stone E.A."/>
            <person name="Payseur B.A."/>
            <person name="Bourque G."/>
            <person name="Lopez-Otin C."/>
            <person name="Puente X.S."/>
            <person name="Chakrabarti K."/>
            <person name="Chatterji S."/>
            <person name="Dewey C."/>
            <person name="Pachter L."/>
            <person name="Bray N."/>
            <person name="Yap V.B."/>
            <person name="Caspi A."/>
            <person name="Tesler G."/>
            <person name="Pevzner P.A."/>
            <person name="Haussler D."/>
            <person name="Roskin K.M."/>
            <person name="Baertsch R."/>
            <person name="Clawson H."/>
            <person name="Furey T.S."/>
            <person name="Hinrichs A.S."/>
            <person name="Karolchik D."/>
            <person name="Kent W.J."/>
            <person name="Rosenbloom K.R."/>
            <person name="Trumbower H."/>
            <person name="Weirauch M."/>
            <person name="Cooper D.N."/>
            <person name="Stenson P.D."/>
            <person name="Ma B."/>
            <person name="Brent M."/>
            <person name="Arumugam M."/>
            <person name="Shteynberg D."/>
            <person name="Copley R.R."/>
            <person name="Taylor M.S."/>
            <person name="Riethman H."/>
            <person name="Mudunuri U."/>
            <person name="Peterson J."/>
            <person name="Guyer M."/>
            <person name="Felsenfeld A."/>
            <person name="Old S."/>
            <person name="Mockrin S."/>
            <person name="Collins F.S."/>
        </authorList>
    </citation>
    <scope>NUCLEOTIDE SEQUENCE [LARGE SCALE GENOMIC DNA]</scope>
    <source>
        <strain>Brown Norway</strain>
    </source>
</reference>
<reference key="2">
    <citation type="submission" date="2005-09" db="EMBL/GenBank/DDBJ databases">
        <authorList>
            <person name="Mural R.J."/>
            <person name="Adams M.D."/>
            <person name="Myers E.W."/>
            <person name="Smith H.O."/>
            <person name="Venter J.C."/>
        </authorList>
    </citation>
    <scope>NUCLEOTIDE SEQUENCE [LARGE SCALE GENOMIC DNA]</scope>
</reference>
<reference key="3">
    <citation type="journal article" date="2013" name="Proc. Natl. Acad. Sci. U.S.A.">
        <title>GPR171 is a hypothalamic G protein-coupled receptor for BigLEN, a neuropeptide involved in feeding.</title>
        <authorList>
            <person name="Gomes I."/>
            <person name="Aryal D.K."/>
            <person name="Wardman J.H."/>
            <person name="Gupta A."/>
            <person name="Gagnidze K."/>
            <person name="Rodriguiz R.M."/>
            <person name="Kumar S."/>
            <person name="Wetsel W.C."/>
            <person name="Pintar J.E."/>
            <person name="Fricker L.D."/>
            <person name="Devi L.A."/>
        </authorList>
    </citation>
    <scope>FUNCTION</scope>
    <scope>SUBCELLULAR LOCATION</scope>
</reference>
<evidence type="ECO:0000250" key="1">
    <source>
        <dbReference type="UniProtKB" id="Q8BG55"/>
    </source>
</evidence>
<evidence type="ECO:0000255" key="2"/>
<evidence type="ECO:0000255" key="3">
    <source>
        <dbReference type="PROSITE-ProRule" id="PRU00521"/>
    </source>
</evidence>
<evidence type="ECO:0000256" key="4">
    <source>
        <dbReference type="SAM" id="MobiDB-lite"/>
    </source>
</evidence>
<evidence type="ECO:0000269" key="5">
    <source>
    </source>
</evidence>
<evidence type="ECO:0000305" key="6"/>
<evidence type="ECO:0000312" key="7">
    <source>
        <dbReference type="RGD" id="1585271"/>
    </source>
</evidence>
<keyword id="KW-1003">Cell membrane</keyword>
<keyword id="KW-1015">Disulfide bond</keyword>
<keyword id="KW-0297">G-protein coupled receptor</keyword>
<keyword id="KW-0472">Membrane</keyword>
<keyword id="KW-0675">Receptor</keyword>
<keyword id="KW-1185">Reference proteome</keyword>
<keyword id="KW-0807">Transducer</keyword>
<keyword id="KW-0812">Transmembrane</keyword>
<keyword id="KW-1133">Transmembrane helix</keyword>
<accession>D4A4Q2</accession>
<comment type="function">
    <text evidence="1 5">G-protein coupled receptor for Big LEN, a 16-amino acid neuropeptide produced from the precursor protein, proSAAS (encoded by PCSK1N) (PubMed:24043826). Acts through a G(i)-alpha-mediated pathway in response to Big LEN. Big LEN-GPR171 system plays an important role in regulating feeding and metabolism. Also plays a role in modulating fear and anxiety-like behaviors in the basolateral amygdala. Big LEN-GPR171 modulates the mu-type opioid receptor signaling and antinociception. Acts as a negative regulator T cell function (By similarity).</text>
</comment>
<comment type="subcellular location">
    <subcellularLocation>
        <location evidence="5">Cell membrane</location>
        <topology evidence="2">Multi-pass membrane protein</topology>
    </subcellularLocation>
    <text evidence="1">Colocalized with GPR83 in the paraventricular nucleus.</text>
</comment>
<comment type="similarity">
    <text evidence="3">Belongs to the G-protein coupled receptor 1 family.</text>
</comment>
<sequence>MTNSSMFCPIYRDLEPFTYFFYLVYLIGIIGSCFATWAFIQKSTNHRCVSIYLINLLTADFLLTLALPVKIVVDLGVAPWKLRIFHCQVTACLIYINMYLSIIFLAFVSIDRCLQLVHSCKIYRIQEPGFAKMISAVVWLMVLLIMVPNMVIPIKNIKEKSNVGCMEFKREFGKNWHLLTNFICVAIFLNFSAIILISNFLVIRQLYRNRDNANYPSVKSALLNILLVTASYIICFVPYHAVRIPYTLSQTEVISDCSTRIALFKAKEATLLLAVSNLCFDPILYYHLSKAFRLKVTETFASPQKMKAREEKPRRENDVQSTGSAC</sequence>
<name>GP171_RAT</name>
<organism>
    <name type="scientific">Rattus norvegicus</name>
    <name type="common">Rat</name>
    <dbReference type="NCBI Taxonomy" id="10116"/>
    <lineage>
        <taxon>Eukaryota</taxon>
        <taxon>Metazoa</taxon>
        <taxon>Chordata</taxon>
        <taxon>Craniata</taxon>
        <taxon>Vertebrata</taxon>
        <taxon>Euteleostomi</taxon>
        <taxon>Mammalia</taxon>
        <taxon>Eutheria</taxon>
        <taxon>Euarchontoglires</taxon>
        <taxon>Glires</taxon>
        <taxon>Rodentia</taxon>
        <taxon>Myomorpha</taxon>
        <taxon>Muroidea</taxon>
        <taxon>Muridae</taxon>
        <taxon>Murinae</taxon>
        <taxon>Rattus</taxon>
    </lineage>
</organism>
<gene>
    <name evidence="7" type="primary">Gpr171</name>
</gene>
<feature type="chain" id="PRO_0000455587" description="G-protein coupled receptor 171">
    <location>
        <begin position="1"/>
        <end position="326"/>
    </location>
</feature>
<feature type="topological domain" description="Extracellular" evidence="6">
    <location>
        <begin position="1"/>
        <end position="19"/>
    </location>
</feature>
<feature type="transmembrane region" description="Helical; Name=1" evidence="2">
    <location>
        <begin position="20"/>
        <end position="40"/>
    </location>
</feature>
<feature type="topological domain" description="Cytoplasmic" evidence="6">
    <location>
        <begin position="41"/>
        <end position="48"/>
    </location>
</feature>
<feature type="transmembrane region" description="Helical; Name=2" evidence="2">
    <location>
        <begin position="49"/>
        <end position="69"/>
    </location>
</feature>
<feature type="topological domain" description="Extracellular" evidence="6">
    <location>
        <begin position="70"/>
        <end position="89"/>
    </location>
</feature>
<feature type="transmembrane region" description="Helical; Name=3" evidence="2">
    <location>
        <begin position="90"/>
        <end position="110"/>
    </location>
</feature>
<feature type="topological domain" description="Cytoplasmic" evidence="6">
    <location>
        <begin position="111"/>
        <end position="133"/>
    </location>
</feature>
<feature type="transmembrane region" description="Helical; Name=4" evidence="2">
    <location>
        <begin position="134"/>
        <end position="154"/>
    </location>
</feature>
<feature type="topological domain" description="Extracellular" evidence="6">
    <location>
        <begin position="155"/>
        <end position="182"/>
    </location>
</feature>
<feature type="transmembrane region" description="Helical; Name=5" evidence="2">
    <location>
        <begin position="183"/>
        <end position="203"/>
    </location>
</feature>
<feature type="topological domain" description="Cytoplasmic" evidence="6">
    <location>
        <begin position="204"/>
        <end position="221"/>
    </location>
</feature>
<feature type="transmembrane region" description="Helical; Name=6" evidence="2">
    <location>
        <begin position="222"/>
        <end position="242"/>
    </location>
</feature>
<feature type="topological domain" description="Extracellular" evidence="6">
    <location>
        <begin position="243"/>
        <end position="268"/>
    </location>
</feature>
<feature type="transmembrane region" description="Helical; Name=7" evidence="2">
    <location>
        <begin position="269"/>
        <end position="289"/>
    </location>
</feature>
<feature type="topological domain" description="Cytoplasmic" evidence="6">
    <location>
        <begin position="290"/>
        <end position="326"/>
    </location>
</feature>
<feature type="region of interest" description="Disordered" evidence="4">
    <location>
        <begin position="305"/>
        <end position="326"/>
    </location>
</feature>
<feature type="compositionally biased region" description="Basic and acidic residues" evidence="4">
    <location>
        <begin position="307"/>
        <end position="318"/>
    </location>
</feature>
<feature type="disulfide bond" evidence="3">
    <location>
        <begin position="87"/>
        <end position="165"/>
    </location>
</feature>
<proteinExistence type="inferred from homology"/>
<protein>
    <recommendedName>
        <fullName>G-protein coupled receptor 171</fullName>
    </recommendedName>
</protein>
<dbReference type="EMBL" id="AC128510">
    <property type="status" value="NOT_ANNOTATED_CDS"/>
    <property type="molecule type" value="Genomic_DNA"/>
</dbReference>
<dbReference type="EMBL" id="CH474003">
    <property type="protein sequence ID" value="EDM14855.1"/>
    <property type="molecule type" value="Genomic_DNA"/>
</dbReference>
<dbReference type="RefSeq" id="NP_001102980.1">
    <property type="nucleotide sequence ID" value="NM_001109510.1"/>
</dbReference>
<dbReference type="RefSeq" id="NP_001383757.1">
    <property type="nucleotide sequence ID" value="NM_001396828.1"/>
</dbReference>
<dbReference type="RefSeq" id="XP_017446606.1">
    <property type="nucleotide sequence ID" value="XM_017591117.1"/>
</dbReference>
<dbReference type="SMR" id="D4A4Q2"/>
<dbReference type="FunCoup" id="D4A4Q2">
    <property type="interactions" value="82"/>
</dbReference>
<dbReference type="STRING" id="10116.ENSRNOP00000038911"/>
<dbReference type="PhosphoSitePlus" id="D4A4Q2"/>
<dbReference type="PaxDb" id="10116-ENSRNOP00000038911"/>
<dbReference type="Ensembl" id="ENSRNOT00000036690.3">
    <property type="protein sequence ID" value="ENSRNOP00000038911.2"/>
    <property type="gene ID" value="ENSRNOG00000025297.3"/>
</dbReference>
<dbReference type="Ensembl" id="ENSRNOT00000102875.1">
    <property type="protein sequence ID" value="ENSRNOP00000080055.1"/>
    <property type="gene ID" value="ENSRNOG00000025297.3"/>
</dbReference>
<dbReference type="GeneID" id="688737"/>
<dbReference type="UCSC" id="RGD:1585271">
    <property type="organism name" value="rat"/>
</dbReference>
<dbReference type="AGR" id="RGD:1585271"/>
<dbReference type="RGD" id="1585271">
    <property type="gene designation" value="Gpr171"/>
</dbReference>
<dbReference type="eggNOG" id="ENOG502QTCA">
    <property type="taxonomic scope" value="Eukaryota"/>
</dbReference>
<dbReference type="GeneTree" id="ENSGT01110000267167"/>
<dbReference type="HOGENOM" id="CLU_009579_8_2_1"/>
<dbReference type="InParanoid" id="D4A4Q2"/>
<dbReference type="OMA" id="EPFTYFY"/>
<dbReference type="OrthoDB" id="9935079at2759"/>
<dbReference type="PhylomeDB" id="D4A4Q2"/>
<dbReference type="TreeFam" id="TF330969"/>
<dbReference type="PRO" id="PR:D4A4Q2"/>
<dbReference type="Proteomes" id="UP000002494">
    <property type="component" value="Chromosome 2"/>
</dbReference>
<dbReference type="Proteomes" id="UP000234681">
    <property type="component" value="Chromosome 2"/>
</dbReference>
<dbReference type="Bgee" id="ENSRNOG00000025297">
    <property type="expression patterns" value="Expressed in spleen and 16 other cell types or tissues"/>
</dbReference>
<dbReference type="GO" id="GO:0005886">
    <property type="term" value="C:plasma membrane"/>
    <property type="evidence" value="ECO:0000314"/>
    <property type="project" value="UniProtKB"/>
</dbReference>
<dbReference type="GO" id="GO:0008528">
    <property type="term" value="F:G protein-coupled peptide receptor activity"/>
    <property type="evidence" value="ECO:0000250"/>
    <property type="project" value="UniProtKB"/>
</dbReference>
<dbReference type="GO" id="GO:0045028">
    <property type="term" value="F:G protein-coupled purinergic nucleotide receptor activity"/>
    <property type="evidence" value="ECO:0000318"/>
    <property type="project" value="GO_Central"/>
</dbReference>
<dbReference type="GO" id="GO:0042923">
    <property type="term" value="F:neuropeptide binding"/>
    <property type="evidence" value="ECO:0000250"/>
    <property type="project" value="UniProtKB"/>
</dbReference>
<dbReference type="GO" id="GO:0008188">
    <property type="term" value="F:neuropeptide receptor activity"/>
    <property type="evidence" value="ECO:0000250"/>
    <property type="project" value="UniProtKB"/>
</dbReference>
<dbReference type="GO" id="GO:0007188">
    <property type="term" value="P:adenylate cyclase-modulating G protein-coupled receptor signaling pathway"/>
    <property type="evidence" value="ECO:0000250"/>
    <property type="project" value="UniProtKB"/>
</dbReference>
<dbReference type="GO" id="GO:0007186">
    <property type="term" value="P:G protein-coupled receptor signaling pathway"/>
    <property type="evidence" value="ECO:0000314"/>
    <property type="project" value="UniProtKB"/>
</dbReference>
<dbReference type="GO" id="GO:0045638">
    <property type="term" value="P:negative regulation of myeloid cell differentiation"/>
    <property type="evidence" value="ECO:0000266"/>
    <property type="project" value="RGD"/>
</dbReference>
<dbReference type="GO" id="GO:0060259">
    <property type="term" value="P:regulation of feeding behavior"/>
    <property type="evidence" value="ECO:0000250"/>
    <property type="project" value="UniProtKB"/>
</dbReference>
<dbReference type="GO" id="GO:0051930">
    <property type="term" value="P:regulation of sensory perception of pain"/>
    <property type="evidence" value="ECO:0000250"/>
    <property type="project" value="UniProtKB"/>
</dbReference>
<dbReference type="CDD" id="cd15167">
    <property type="entry name" value="7tmA_GPR171"/>
    <property type="match status" value="1"/>
</dbReference>
<dbReference type="FunFam" id="1.20.1070.10:FF:000206">
    <property type="entry name" value="Probable G-protein coupled receptor 171"/>
    <property type="match status" value="1"/>
</dbReference>
<dbReference type="Gene3D" id="1.20.1070.10">
    <property type="entry name" value="Rhodopsin 7-helix transmembrane proteins"/>
    <property type="match status" value="1"/>
</dbReference>
<dbReference type="InterPro" id="IPR000276">
    <property type="entry name" value="GPCR_Rhodpsn"/>
</dbReference>
<dbReference type="InterPro" id="IPR017452">
    <property type="entry name" value="GPCR_Rhodpsn_7TM"/>
</dbReference>
<dbReference type="InterPro" id="IPR048077">
    <property type="entry name" value="GPR171"/>
</dbReference>
<dbReference type="PANTHER" id="PTHR24233:SF4">
    <property type="entry name" value="G-PROTEIN COUPLED RECEPTOR 171"/>
    <property type="match status" value="1"/>
</dbReference>
<dbReference type="PANTHER" id="PTHR24233">
    <property type="entry name" value="P2Y PURINOCEPTOR-RELATED G-PROTEIN COUPLED RECEPTOR"/>
    <property type="match status" value="1"/>
</dbReference>
<dbReference type="Pfam" id="PF00001">
    <property type="entry name" value="7tm_1"/>
    <property type="match status" value="1"/>
</dbReference>
<dbReference type="PRINTS" id="PR00237">
    <property type="entry name" value="GPCRRHODOPSN"/>
</dbReference>
<dbReference type="PRINTS" id="PR01157">
    <property type="entry name" value="P2YPURNOCPTR"/>
</dbReference>
<dbReference type="SUPFAM" id="SSF81321">
    <property type="entry name" value="Family A G protein-coupled receptor-like"/>
    <property type="match status" value="1"/>
</dbReference>
<dbReference type="PROSITE" id="PS00237">
    <property type="entry name" value="G_PROTEIN_RECEP_F1_1"/>
    <property type="match status" value="1"/>
</dbReference>
<dbReference type="PROSITE" id="PS50262">
    <property type="entry name" value="G_PROTEIN_RECEP_F1_2"/>
    <property type="match status" value="1"/>
</dbReference>